<reference key="1">
    <citation type="submission" date="2009-02" db="EMBL/GenBank/DDBJ databases">
        <title>Genome sequence of Bacillus cereus 03BB102.</title>
        <authorList>
            <person name="Dodson R.J."/>
            <person name="Jackson P."/>
            <person name="Munk A.C."/>
            <person name="Brettin T."/>
            <person name="Bruce D."/>
            <person name="Detter C."/>
            <person name="Tapia R."/>
            <person name="Han C."/>
            <person name="Sutton G."/>
            <person name="Sims D."/>
        </authorList>
    </citation>
    <scope>NUCLEOTIDE SEQUENCE [LARGE SCALE GENOMIC DNA]</scope>
    <source>
        <strain>03BB102</strain>
    </source>
</reference>
<proteinExistence type="inferred from homology"/>
<keyword id="KW-0143">Chaperone</keyword>
<keyword id="KW-0963">Cytoplasm</keyword>
<sequence>MLKPLGDRVVIELVQAEEKTASGIVLPDTAKEKPQEGKVIAVGTGRVLENGERVALEVAAGDLIIFSKYAGTEVKYEGTDYLILRESDILAVIG</sequence>
<accession>C1EUB0</accession>
<feature type="chain" id="PRO_1000146886" description="Co-chaperonin GroES">
    <location>
        <begin position="1"/>
        <end position="94"/>
    </location>
</feature>
<gene>
    <name evidence="1" type="primary">groES</name>
    <name evidence="1" type="synonym">groS</name>
    <name type="ordered locus">BCA_0319</name>
</gene>
<comment type="function">
    <text evidence="1">Together with the chaperonin GroEL, plays an essential role in assisting protein folding. The GroEL-GroES system forms a nano-cage that allows encapsulation of the non-native substrate proteins and provides a physical environment optimized to promote and accelerate protein folding. GroES binds to the apical surface of the GroEL ring, thereby capping the opening of the GroEL channel.</text>
</comment>
<comment type="subunit">
    <text evidence="1">Heptamer of 7 subunits arranged in a ring. Interacts with the chaperonin GroEL.</text>
</comment>
<comment type="subcellular location">
    <subcellularLocation>
        <location evidence="1">Cytoplasm</location>
    </subcellularLocation>
</comment>
<comment type="similarity">
    <text evidence="1">Belongs to the GroES chaperonin family.</text>
</comment>
<dbReference type="EMBL" id="CP001407">
    <property type="protein sequence ID" value="ACO29974.1"/>
    <property type="molecule type" value="Genomic_DNA"/>
</dbReference>
<dbReference type="RefSeq" id="WP_000917306.1">
    <property type="nucleotide sequence ID" value="NZ_CP009318.1"/>
</dbReference>
<dbReference type="SMR" id="C1EUB0"/>
<dbReference type="GeneID" id="93010771"/>
<dbReference type="KEGG" id="bcx:BCA_0319"/>
<dbReference type="PATRIC" id="fig|572264.18.peg.327"/>
<dbReference type="Proteomes" id="UP000002210">
    <property type="component" value="Chromosome"/>
</dbReference>
<dbReference type="GO" id="GO:0005737">
    <property type="term" value="C:cytoplasm"/>
    <property type="evidence" value="ECO:0007669"/>
    <property type="project" value="UniProtKB-SubCell"/>
</dbReference>
<dbReference type="GO" id="GO:0005524">
    <property type="term" value="F:ATP binding"/>
    <property type="evidence" value="ECO:0007669"/>
    <property type="project" value="InterPro"/>
</dbReference>
<dbReference type="GO" id="GO:0046872">
    <property type="term" value="F:metal ion binding"/>
    <property type="evidence" value="ECO:0007669"/>
    <property type="project" value="TreeGrafter"/>
</dbReference>
<dbReference type="GO" id="GO:0044183">
    <property type="term" value="F:protein folding chaperone"/>
    <property type="evidence" value="ECO:0007669"/>
    <property type="project" value="InterPro"/>
</dbReference>
<dbReference type="GO" id="GO:0051087">
    <property type="term" value="F:protein-folding chaperone binding"/>
    <property type="evidence" value="ECO:0007669"/>
    <property type="project" value="TreeGrafter"/>
</dbReference>
<dbReference type="GO" id="GO:0051082">
    <property type="term" value="F:unfolded protein binding"/>
    <property type="evidence" value="ECO:0007669"/>
    <property type="project" value="TreeGrafter"/>
</dbReference>
<dbReference type="GO" id="GO:0051085">
    <property type="term" value="P:chaperone cofactor-dependent protein refolding"/>
    <property type="evidence" value="ECO:0007669"/>
    <property type="project" value="TreeGrafter"/>
</dbReference>
<dbReference type="CDD" id="cd00320">
    <property type="entry name" value="cpn10"/>
    <property type="match status" value="1"/>
</dbReference>
<dbReference type="FunFam" id="2.30.33.40:FF:000001">
    <property type="entry name" value="10 kDa chaperonin"/>
    <property type="match status" value="1"/>
</dbReference>
<dbReference type="Gene3D" id="2.30.33.40">
    <property type="entry name" value="GroES chaperonin"/>
    <property type="match status" value="1"/>
</dbReference>
<dbReference type="HAMAP" id="MF_00580">
    <property type="entry name" value="CH10"/>
    <property type="match status" value="1"/>
</dbReference>
<dbReference type="InterPro" id="IPR020818">
    <property type="entry name" value="Chaperonin_GroES"/>
</dbReference>
<dbReference type="InterPro" id="IPR037124">
    <property type="entry name" value="Chaperonin_GroES_sf"/>
</dbReference>
<dbReference type="InterPro" id="IPR018369">
    <property type="entry name" value="Chaprnonin_Cpn10_CS"/>
</dbReference>
<dbReference type="InterPro" id="IPR011032">
    <property type="entry name" value="GroES-like_sf"/>
</dbReference>
<dbReference type="NCBIfam" id="NF001527">
    <property type="entry name" value="PRK00364.1-2"/>
    <property type="match status" value="1"/>
</dbReference>
<dbReference type="NCBIfam" id="NF001530">
    <property type="entry name" value="PRK00364.1-6"/>
    <property type="match status" value="1"/>
</dbReference>
<dbReference type="NCBIfam" id="NF001531">
    <property type="entry name" value="PRK00364.2-2"/>
    <property type="match status" value="1"/>
</dbReference>
<dbReference type="NCBIfam" id="NF001533">
    <property type="entry name" value="PRK00364.2-4"/>
    <property type="match status" value="1"/>
</dbReference>
<dbReference type="NCBIfam" id="NF001534">
    <property type="entry name" value="PRK00364.2-5"/>
    <property type="match status" value="1"/>
</dbReference>
<dbReference type="PANTHER" id="PTHR10772">
    <property type="entry name" value="10 KDA HEAT SHOCK PROTEIN"/>
    <property type="match status" value="1"/>
</dbReference>
<dbReference type="PANTHER" id="PTHR10772:SF58">
    <property type="entry name" value="CO-CHAPERONIN GROES"/>
    <property type="match status" value="1"/>
</dbReference>
<dbReference type="Pfam" id="PF00166">
    <property type="entry name" value="Cpn10"/>
    <property type="match status" value="1"/>
</dbReference>
<dbReference type="PRINTS" id="PR00297">
    <property type="entry name" value="CHAPERONIN10"/>
</dbReference>
<dbReference type="SMART" id="SM00883">
    <property type="entry name" value="Cpn10"/>
    <property type="match status" value="1"/>
</dbReference>
<dbReference type="SUPFAM" id="SSF50129">
    <property type="entry name" value="GroES-like"/>
    <property type="match status" value="1"/>
</dbReference>
<dbReference type="PROSITE" id="PS00681">
    <property type="entry name" value="CHAPERONINS_CPN10"/>
    <property type="match status" value="1"/>
</dbReference>
<protein>
    <recommendedName>
        <fullName evidence="1">Co-chaperonin GroES</fullName>
    </recommendedName>
    <alternativeName>
        <fullName evidence="1">10 kDa chaperonin</fullName>
    </alternativeName>
    <alternativeName>
        <fullName evidence="1">Chaperonin-10</fullName>
        <shortName evidence="1">Cpn10</shortName>
    </alternativeName>
</protein>
<evidence type="ECO:0000255" key="1">
    <source>
        <dbReference type="HAMAP-Rule" id="MF_00580"/>
    </source>
</evidence>
<organism>
    <name type="scientific">Bacillus cereus (strain 03BB102)</name>
    <dbReference type="NCBI Taxonomy" id="572264"/>
    <lineage>
        <taxon>Bacteria</taxon>
        <taxon>Bacillati</taxon>
        <taxon>Bacillota</taxon>
        <taxon>Bacilli</taxon>
        <taxon>Bacillales</taxon>
        <taxon>Bacillaceae</taxon>
        <taxon>Bacillus</taxon>
        <taxon>Bacillus cereus group</taxon>
    </lineage>
</organism>
<name>CH10_BACC3</name>